<proteinExistence type="evidence at protein level"/>
<feature type="chain" id="PRO_0000114921" description="Homocysteine-responsive endoplasmic reticulum-resident ubiquitin-like domain member 1 protein">
    <location>
        <begin position="1"/>
        <end position="391"/>
    </location>
</feature>
<feature type="topological domain" description="Cytoplasmic" evidence="3">
    <location>
        <begin position="1"/>
        <end position="263"/>
    </location>
</feature>
<feature type="transmembrane region" description="Helical" evidence="3">
    <location>
        <begin position="264"/>
        <end position="284"/>
    </location>
</feature>
<feature type="topological domain" description="Lumenal" evidence="3">
    <location>
        <begin position="285"/>
        <end position="289"/>
    </location>
</feature>
<feature type="transmembrane region" description="Helical" evidence="3">
    <location>
        <begin position="290"/>
        <end position="310"/>
    </location>
</feature>
<feature type="topological domain" description="Cytoplasmic" evidence="3">
    <location>
        <begin position="311"/>
        <end position="391"/>
    </location>
</feature>
<feature type="domain" description="Ubiquitin-like" evidence="4">
    <location>
        <begin position="10"/>
        <end position="72"/>
    </location>
</feature>
<feature type="region of interest" description="Disordered" evidence="5">
    <location>
        <begin position="90"/>
        <end position="126"/>
    </location>
</feature>
<feature type="region of interest" description="Interaction with UBQLN1" evidence="2">
    <location>
        <begin position="115"/>
        <end position="200"/>
    </location>
</feature>
<feature type="region of interest" description="Disordered" evidence="5">
    <location>
        <begin position="317"/>
        <end position="361"/>
    </location>
</feature>
<feature type="compositionally biased region" description="Polar residues" evidence="5">
    <location>
        <begin position="95"/>
        <end position="124"/>
    </location>
</feature>
<feature type="compositionally biased region" description="Basic and acidic residues" evidence="5">
    <location>
        <begin position="346"/>
        <end position="361"/>
    </location>
</feature>
<feature type="modified residue" description="N-acetylmethionine" evidence="2">
    <location>
        <position position="1"/>
    </location>
</feature>
<feature type="modified residue" description="Phosphoserine" evidence="2">
    <location>
        <position position="135"/>
    </location>
</feature>
<organism>
    <name type="scientific">Mus musculus</name>
    <name type="common">Mouse</name>
    <dbReference type="NCBI Taxonomy" id="10090"/>
    <lineage>
        <taxon>Eukaryota</taxon>
        <taxon>Metazoa</taxon>
        <taxon>Chordata</taxon>
        <taxon>Craniata</taxon>
        <taxon>Vertebrata</taxon>
        <taxon>Euteleostomi</taxon>
        <taxon>Mammalia</taxon>
        <taxon>Eutheria</taxon>
        <taxon>Euarchontoglires</taxon>
        <taxon>Glires</taxon>
        <taxon>Rodentia</taxon>
        <taxon>Myomorpha</taxon>
        <taxon>Muroidea</taxon>
        <taxon>Muridae</taxon>
        <taxon>Murinae</taxon>
        <taxon>Mus</taxon>
        <taxon>Mus</taxon>
    </lineage>
</organism>
<reference key="1">
    <citation type="journal article" date="2000" name="J. Biol. Chem.">
        <title>Herp, a new ubiquitin-like membrane protein induced by endoplasmic reticulum stress.</title>
        <authorList>
            <person name="Kokame K."/>
            <person name="Agarwala K.L."/>
            <person name="Kato H."/>
            <person name="Miyata T."/>
        </authorList>
    </citation>
    <scope>NUCLEOTIDE SEQUENCE [MRNA]</scope>
</reference>
<reference key="2">
    <citation type="journal article" date="2010" name="Cell">
        <title>A tissue-specific atlas of mouse protein phosphorylation and expression.</title>
        <authorList>
            <person name="Huttlin E.L."/>
            <person name="Jedrychowski M.P."/>
            <person name="Elias J.E."/>
            <person name="Goswami T."/>
            <person name="Rad R."/>
            <person name="Beausoleil S.A."/>
            <person name="Villen J."/>
            <person name="Haas W."/>
            <person name="Sowa M.E."/>
            <person name="Gygi S.P."/>
        </authorList>
    </citation>
    <scope>IDENTIFICATION BY MASS SPECTROMETRY [LARGE SCALE ANALYSIS]</scope>
    <source>
        <tissue>Pancreas</tissue>
    </source>
</reference>
<gene>
    <name type="primary">Herpud1</name>
</gene>
<accession>Q9JJK5</accession>
<evidence type="ECO:0000250" key="1"/>
<evidence type="ECO:0000250" key="2">
    <source>
        <dbReference type="UniProtKB" id="Q15011"/>
    </source>
</evidence>
<evidence type="ECO:0000255" key="3"/>
<evidence type="ECO:0000255" key="4">
    <source>
        <dbReference type="PROSITE-ProRule" id="PRU00214"/>
    </source>
</evidence>
<evidence type="ECO:0000256" key="5">
    <source>
        <dbReference type="SAM" id="MobiDB-lite"/>
    </source>
</evidence>
<dbReference type="EMBL" id="AB034991">
    <property type="protein sequence ID" value="BAB07892.1"/>
    <property type="molecule type" value="mRNA"/>
</dbReference>
<dbReference type="CCDS" id="CCDS22541.1"/>
<dbReference type="RefSeq" id="NP_071726.1">
    <property type="nucleotide sequence ID" value="NM_022331.2"/>
</dbReference>
<dbReference type="SMR" id="Q9JJK5"/>
<dbReference type="BioGRID" id="211038">
    <property type="interactions" value="3"/>
</dbReference>
<dbReference type="FunCoup" id="Q9JJK5">
    <property type="interactions" value="1189"/>
</dbReference>
<dbReference type="STRING" id="10090.ENSMUSP00000124201"/>
<dbReference type="GlyGen" id="Q9JJK5">
    <property type="glycosylation" value="1 site"/>
</dbReference>
<dbReference type="iPTMnet" id="Q9JJK5"/>
<dbReference type="PhosphoSitePlus" id="Q9JJK5"/>
<dbReference type="jPOST" id="Q9JJK5"/>
<dbReference type="PaxDb" id="10090-ENSMUSP00000124201"/>
<dbReference type="ProteomicsDB" id="269826"/>
<dbReference type="Pumba" id="Q9JJK5"/>
<dbReference type="Antibodypedia" id="28691">
    <property type="antibodies" value="290 antibodies from 33 providers"/>
</dbReference>
<dbReference type="DNASU" id="64209"/>
<dbReference type="Ensembl" id="ENSMUST00000161576.8">
    <property type="protein sequence ID" value="ENSMUSP00000124201.2"/>
    <property type="gene ID" value="ENSMUSG00000031770.17"/>
</dbReference>
<dbReference type="GeneID" id="64209"/>
<dbReference type="KEGG" id="mmu:64209"/>
<dbReference type="UCSC" id="uc009mwg.1">
    <property type="organism name" value="mouse"/>
</dbReference>
<dbReference type="AGR" id="MGI:1927406"/>
<dbReference type="CTD" id="9709"/>
<dbReference type="MGI" id="MGI:1927406">
    <property type="gene designation" value="Herpud1"/>
</dbReference>
<dbReference type="VEuPathDB" id="HostDB:ENSMUSG00000031770"/>
<dbReference type="eggNOG" id="KOG4583">
    <property type="taxonomic scope" value="Eukaryota"/>
</dbReference>
<dbReference type="GeneTree" id="ENSGT00390000017671"/>
<dbReference type="HOGENOM" id="CLU_058243_0_0_1"/>
<dbReference type="InParanoid" id="Q9JJK5"/>
<dbReference type="OMA" id="MSTAWVF"/>
<dbReference type="OrthoDB" id="21589at2759"/>
<dbReference type="PhylomeDB" id="Q9JJK5"/>
<dbReference type="TreeFam" id="TF324319"/>
<dbReference type="BioGRID-ORCS" id="64209">
    <property type="hits" value="2 hits in 82 CRISPR screens"/>
</dbReference>
<dbReference type="ChiTaRS" id="Herpud1">
    <property type="organism name" value="mouse"/>
</dbReference>
<dbReference type="PRO" id="PR:Q9JJK5"/>
<dbReference type="Proteomes" id="UP000000589">
    <property type="component" value="Chromosome 8"/>
</dbReference>
<dbReference type="RNAct" id="Q9JJK5">
    <property type="molecule type" value="protein"/>
</dbReference>
<dbReference type="Bgee" id="ENSMUSG00000031770">
    <property type="expression patterns" value="Expressed in lacrimal gland and 269 other cell types or tissues"/>
</dbReference>
<dbReference type="ExpressionAtlas" id="Q9JJK5">
    <property type="expression patterns" value="baseline and differential"/>
</dbReference>
<dbReference type="GO" id="GO:0005783">
    <property type="term" value="C:endoplasmic reticulum"/>
    <property type="evidence" value="ECO:0000314"/>
    <property type="project" value="ParkinsonsUK-UCL"/>
</dbReference>
<dbReference type="GO" id="GO:0005789">
    <property type="term" value="C:endoplasmic reticulum membrane"/>
    <property type="evidence" value="ECO:0000314"/>
    <property type="project" value="MGI"/>
</dbReference>
<dbReference type="GO" id="GO:0044322">
    <property type="term" value="C:endoplasmic reticulum quality control compartment"/>
    <property type="evidence" value="ECO:0000314"/>
    <property type="project" value="UniProtKB"/>
</dbReference>
<dbReference type="GO" id="GO:0000836">
    <property type="term" value="C:Hrd1p ubiquitin ligase complex"/>
    <property type="evidence" value="ECO:0007669"/>
    <property type="project" value="Ensembl"/>
</dbReference>
<dbReference type="GO" id="GO:1990037">
    <property type="term" value="C:Lewy body core"/>
    <property type="evidence" value="ECO:0007669"/>
    <property type="project" value="Ensembl"/>
</dbReference>
<dbReference type="GO" id="GO:0016020">
    <property type="term" value="C:membrane"/>
    <property type="evidence" value="ECO:0000314"/>
    <property type="project" value="MGI"/>
</dbReference>
<dbReference type="GO" id="GO:0044325">
    <property type="term" value="F:transmembrane transporter binding"/>
    <property type="evidence" value="ECO:0007669"/>
    <property type="project" value="Ensembl"/>
</dbReference>
<dbReference type="GO" id="GO:1990756">
    <property type="term" value="F:ubiquitin-like ligase-substrate adaptor activity"/>
    <property type="evidence" value="ECO:0000315"/>
    <property type="project" value="MGI"/>
</dbReference>
<dbReference type="GO" id="GO:0032469">
    <property type="term" value="P:endoplasmic reticulum calcium ion homeostasis"/>
    <property type="evidence" value="ECO:0007669"/>
    <property type="project" value="Ensembl"/>
</dbReference>
<dbReference type="GO" id="GO:0030968">
    <property type="term" value="P:endoplasmic reticulum unfolded protein response"/>
    <property type="evidence" value="ECO:0000314"/>
    <property type="project" value="MGI"/>
</dbReference>
<dbReference type="GO" id="GO:1902236">
    <property type="term" value="P:negative regulation of endoplasmic reticulum stress-induced intrinsic apoptotic signaling pathway"/>
    <property type="evidence" value="ECO:0007669"/>
    <property type="project" value="Ensembl"/>
</dbReference>
<dbReference type="GO" id="GO:1904294">
    <property type="term" value="P:positive regulation of ERAD pathway"/>
    <property type="evidence" value="ECO:0000250"/>
    <property type="project" value="UniProtKB"/>
</dbReference>
<dbReference type="GO" id="GO:2000060">
    <property type="term" value="P:positive regulation of ubiquitin-dependent protein catabolic process"/>
    <property type="evidence" value="ECO:0007669"/>
    <property type="project" value="Ensembl"/>
</dbReference>
<dbReference type="GO" id="GO:0045047">
    <property type="term" value="P:protein targeting to ER"/>
    <property type="evidence" value="ECO:0000315"/>
    <property type="project" value="UniProtKB"/>
</dbReference>
<dbReference type="GO" id="GO:1902235">
    <property type="term" value="P:regulation of endoplasmic reticulum stress-induced intrinsic apoptotic signaling pathway"/>
    <property type="evidence" value="ECO:0000315"/>
    <property type="project" value="ParkinsonsUK-UCL"/>
</dbReference>
<dbReference type="GO" id="GO:1904292">
    <property type="term" value="P:regulation of ERAD pathway"/>
    <property type="evidence" value="ECO:0000315"/>
    <property type="project" value="ParkinsonsUK-UCL"/>
</dbReference>
<dbReference type="GO" id="GO:0031396">
    <property type="term" value="P:regulation of protein ubiquitination"/>
    <property type="evidence" value="ECO:0000315"/>
    <property type="project" value="MGI"/>
</dbReference>
<dbReference type="GO" id="GO:0034976">
    <property type="term" value="P:response to endoplasmic reticulum stress"/>
    <property type="evidence" value="ECO:0000314"/>
    <property type="project" value="MGI"/>
</dbReference>
<dbReference type="GO" id="GO:0030970">
    <property type="term" value="P:retrograde protein transport, ER to cytosol"/>
    <property type="evidence" value="ECO:0007669"/>
    <property type="project" value="Ensembl"/>
</dbReference>
<dbReference type="GO" id="GO:0006511">
    <property type="term" value="P:ubiquitin-dependent protein catabolic process"/>
    <property type="evidence" value="ECO:0000314"/>
    <property type="project" value="MGI"/>
</dbReference>
<dbReference type="CDD" id="cd17118">
    <property type="entry name" value="Ubl_HERP1"/>
    <property type="match status" value="1"/>
</dbReference>
<dbReference type="FunFam" id="3.10.20.90:FF:000046">
    <property type="entry name" value="Homocysteine-responsive endoplasmic reticulum-resident ubiquitin-like domain member 2 protein"/>
    <property type="match status" value="1"/>
</dbReference>
<dbReference type="Gene3D" id="3.10.20.90">
    <property type="entry name" value="Phosphatidylinositol 3-kinase Catalytic Subunit, Chain A, domain 1"/>
    <property type="match status" value="1"/>
</dbReference>
<dbReference type="InterPro" id="IPR039751">
    <property type="entry name" value="HERPUD1/2"/>
</dbReference>
<dbReference type="InterPro" id="IPR000626">
    <property type="entry name" value="Ubiquitin-like_dom"/>
</dbReference>
<dbReference type="InterPro" id="IPR029071">
    <property type="entry name" value="Ubiquitin-like_domsf"/>
</dbReference>
<dbReference type="PANTHER" id="PTHR12943:SF7">
    <property type="entry name" value="HOMOCYSTEINE-RESPONSIVE ENDOPLASMIC RETICULUM-RESIDENT UBIQUITIN-LIKE DOMAIN MEMBER 1 PROTEIN"/>
    <property type="match status" value="1"/>
</dbReference>
<dbReference type="PANTHER" id="PTHR12943">
    <property type="entry name" value="HOMOCYSTEINE-RESPONSIVE ENDOPLASMIC RETICULUM-RESIDENT UNIQUITIN-LIKE DOMAIN HERPUD PROTEIN FAMILY MEMBER"/>
    <property type="match status" value="1"/>
</dbReference>
<dbReference type="Pfam" id="PF00240">
    <property type="entry name" value="ubiquitin"/>
    <property type="match status" value="1"/>
</dbReference>
<dbReference type="SMART" id="SM00213">
    <property type="entry name" value="UBQ"/>
    <property type="match status" value="1"/>
</dbReference>
<dbReference type="SUPFAM" id="SSF54236">
    <property type="entry name" value="Ubiquitin-like"/>
    <property type="match status" value="1"/>
</dbReference>
<dbReference type="PROSITE" id="PS50053">
    <property type="entry name" value="UBIQUITIN_2"/>
    <property type="match status" value="1"/>
</dbReference>
<keyword id="KW-0007">Acetylation</keyword>
<keyword id="KW-0256">Endoplasmic reticulum</keyword>
<keyword id="KW-0472">Membrane</keyword>
<keyword id="KW-0597">Phosphoprotein</keyword>
<keyword id="KW-1185">Reference proteome</keyword>
<keyword id="KW-0812">Transmembrane</keyword>
<keyword id="KW-1133">Transmembrane helix</keyword>
<keyword id="KW-0834">Unfolded protein response</keyword>
<sequence length="391" mass="43907">MEPEPQPEPVTLLVKSPNQRHRDLELSGDRSWSVSRLKAHLSRVYPERPRPEDQRLIYSGKLLLDHQCLQDLLPKQEKRHVLHLVCNVKNPSKMPETSTKGAESTEQPDNSNQTQHPGDSSSDGLRQREVLRNLSPSGWENISRPEAVQQTFQGLGPGFSGYTTYGWLQLSWFQQIYARQYYMQYLAATAASGTFVPTPSAQEIPVVSTPAPAPIHNQFPAENQPANQNAAAQAVVNPGANQNLRMNAQGGPLVEEDDEINRDWLDWTYSAATFSVFLSILYFYSSLSRFLMVMGATVVMYLHHVGWFPFRQRPVQNFPDDGGPRDAANQDPNNNLQGGMDPEMEDPNRLPPDREVLDPEHTSPSFMSTAWLVFKTFFASLLPEGPPALAN</sequence>
<protein>
    <recommendedName>
        <fullName>Homocysteine-responsive endoplasmic reticulum-resident ubiquitin-like domain member 1 protein</fullName>
    </recommendedName>
</protein>
<comment type="function">
    <text evidence="2">Component of the endoplasmic reticulum quality control (ERQC) system also called ER-associated degradation (ERAD) involved in ubiquitin-dependent degradation of misfolded endoplasmic reticulum proteins. Binds to ubiquilins and this interaction is required for efficient degradation of CD3D via the ERAD pathway.</text>
</comment>
<comment type="subunit">
    <text evidence="2">Interacts with PSEN1 and PSEN2 (By similarity). Interacts with UBXN6 (By similarity). Interacts with UBQLN1, UBQLN2 and UBQLN4 (By similarity). Component of the HRD1 complex, which comprises at least SYNV1/HRD1, FAM8A1, HERPUD1/HERP, OS9, SEL1L and UBE2J1. FAM8A1 binding to SYNV1 may promote recruitment of HERPUD1 to the HRD1 complex (By similarity).</text>
</comment>
<comment type="subcellular location">
    <subcellularLocation>
        <location evidence="1">Endoplasmic reticulum membrane</location>
        <topology evidence="1">Multi-pass membrane protein</topology>
    </subcellularLocation>
</comment>
<name>HERP1_MOUSE</name>